<sequence>METRQVSRSPRVRLLLLLLLLLVVPWGVRTASGVALPPVGVLSLRPPGRAWADPATPRPRRSLALADDAAFRERARLLAALERRHWLNSYMHKLLVLDAP</sequence>
<protein>
    <recommendedName>
        <fullName>Tuberoinfundibular peptide of 39 residues</fullName>
        <shortName>TIP39</shortName>
    </recommendedName>
    <alternativeName>
        <fullName>Parathyroid hormone 2</fullName>
    </alternativeName>
</protein>
<evidence type="ECO:0000250" key="1"/>
<evidence type="ECO:0000255" key="2"/>
<evidence type="ECO:0000269" key="3">
    <source>
    </source>
</evidence>
<evidence type="ECO:0000269" key="4">
    <source>
    </source>
</evidence>
<evidence type="ECO:0000305" key="5"/>
<organism>
    <name type="scientific">Bos taurus</name>
    <name type="common">Bovine</name>
    <dbReference type="NCBI Taxonomy" id="9913"/>
    <lineage>
        <taxon>Eukaryota</taxon>
        <taxon>Metazoa</taxon>
        <taxon>Chordata</taxon>
        <taxon>Craniata</taxon>
        <taxon>Vertebrata</taxon>
        <taxon>Euteleostomi</taxon>
        <taxon>Mammalia</taxon>
        <taxon>Eutheria</taxon>
        <taxon>Laurasiatheria</taxon>
        <taxon>Artiodactyla</taxon>
        <taxon>Ruminantia</taxon>
        <taxon>Pecora</taxon>
        <taxon>Bovidae</taxon>
        <taxon>Bovinae</taxon>
        <taxon>Bos</taxon>
    </lineage>
</organism>
<accession>P0C171</accession>
<gene>
    <name type="primary">PTH2</name>
    <name type="synonym">TIP39</name>
    <name type="synonym">TIPF39</name>
</gene>
<comment type="function">
    <text evidence="3 4">Plays a role as a potent and selective agonist of PTH2R resulting in adenyl cyclase activation and intracellular calcium levels elevation. Induces protein kinase C beta activation, recruitment of beta-arrestin and PTH2R internalization. May inhibit cell proliferation via its action of PTH2R activation. Neuropeptide which may also have a role in spermatogenesis. May activate nociceptors and nociceptive circuits.</text>
</comment>
<comment type="subunit">
    <text>Ligand of high affinity for the PTH2 receptor (PTH2R).</text>
</comment>
<comment type="subcellular location">
    <subcellularLocation>
        <location>Secreted</location>
    </subcellularLocation>
</comment>
<comment type="mass spectrometry"/>
<comment type="miscellaneous">
    <text>The N-terminal truncation of tuberoinfundibular peptide of 39 residues [TIP39(7-39)] reverses PTH2R/PTHR1 binding selectivity, then is a highly potent and selective antagonist for PTHR1. It displays a more favorable in vitro pharmacological profile than antagonists derived from the structure of PTH or PTHLH.</text>
</comment>
<comment type="similarity">
    <text evidence="5">Belongs to the parathyroid hormone family.</text>
</comment>
<keyword id="KW-0165">Cleavage on pair of basic residues</keyword>
<keyword id="KW-0903">Direct protein sequencing</keyword>
<keyword id="KW-0527">Neuropeptide</keyword>
<keyword id="KW-1185">Reference proteome</keyword>
<keyword id="KW-0964">Secreted</keyword>
<keyword id="KW-0732">Signal</keyword>
<reference key="1">
    <citation type="journal article" date="2009" name="Science">
        <title>The genome sequence of taurine cattle: a window to ruminant biology and evolution.</title>
        <authorList>
            <consortium name="The bovine genome sequencing and analysis consortium"/>
        </authorList>
    </citation>
    <scope>NUCLEOTIDE SEQUENCE [LARGE SCALE GENOMIC DNA]</scope>
    <source>
        <strain>Hereford</strain>
    </source>
</reference>
<reference key="2">
    <citation type="journal article" date="1999" name="Nat. Neurosci.">
        <title>TIP39: a new neuropeptide and PTH2-receptor agonist from hypothalamus.</title>
        <authorList>
            <person name="Usdin T.B."/>
            <person name="Hoare S.R.J."/>
            <person name="Wang T."/>
            <person name="Mezey E."/>
            <person name="Kowalak J.A."/>
        </authorList>
    </citation>
    <scope>PROTEIN SEQUENCE OF 62-100</scope>
    <scope>FUNCTION</scope>
    <scope>INTERACTION WITH PTH2R</scope>
    <scope>MASS SPECTROMETRY</scope>
    <source>
        <tissue>Hypothalamus</tissue>
    </source>
</reference>
<reference key="3">
    <citation type="journal article" date="2000" name="J. Pharmacol. Exp. Ther.">
        <title>Tuberoinfundibular peptide (7-39) [TIP(7-39)], a novel, selective, high-affinity antagonist for the parathyroid hormone-1 receptor with no detectable agonist activity.</title>
        <authorList>
            <person name="Hoare S.R.J."/>
            <person name="Usdin T.B."/>
        </authorList>
    </citation>
    <scope>FUNCTION OF TRUNCATED PEPTIDE</scope>
</reference>
<dbReference type="EMBL" id="AC010619">
    <property type="status" value="NOT_ANNOTATED_CDS"/>
    <property type="molecule type" value="Genomic_DNA"/>
</dbReference>
<dbReference type="SMR" id="P0C171"/>
<dbReference type="STRING" id="9913.ENSBTAP00000001408"/>
<dbReference type="InParanoid" id="P0C171"/>
<dbReference type="Proteomes" id="UP000009136">
    <property type="component" value="Unplaced"/>
</dbReference>
<dbReference type="GO" id="GO:0005576">
    <property type="term" value="C:extracellular region"/>
    <property type="evidence" value="ECO:0007669"/>
    <property type="project" value="UniProtKB-SubCell"/>
</dbReference>
<dbReference type="GO" id="GO:0007218">
    <property type="term" value="P:neuropeptide signaling pathway"/>
    <property type="evidence" value="ECO:0007669"/>
    <property type="project" value="UniProtKB-KW"/>
</dbReference>
<dbReference type="InterPro" id="IPR029396">
    <property type="entry name" value="TIP39"/>
</dbReference>
<dbReference type="PANTHER" id="PTHR28585">
    <property type="entry name" value="TUBEROINFUNDIBULAR PEPTIDE OF 39 RESIDUES"/>
    <property type="match status" value="1"/>
</dbReference>
<dbReference type="PANTHER" id="PTHR28585:SF1">
    <property type="entry name" value="TUBEROINFUNDIBULAR PEPTIDE OF 39 RESIDUES"/>
    <property type="match status" value="1"/>
</dbReference>
<dbReference type="Pfam" id="PF14980">
    <property type="entry name" value="TIP39"/>
    <property type="match status" value="1"/>
</dbReference>
<feature type="signal peptide" evidence="2">
    <location>
        <begin position="1"/>
        <end position="30"/>
    </location>
</feature>
<feature type="propeptide" id="PRO_0000227668" evidence="1">
    <location>
        <begin position="31"/>
        <end position="59"/>
    </location>
</feature>
<feature type="peptide" id="PRO_0000227669" description="Tuberoinfundibular peptide of 39 residues">
    <location>
        <begin position="62"/>
        <end position="100"/>
    </location>
</feature>
<proteinExistence type="evidence at protein level"/>
<name>TIP39_BOVIN</name>